<proteinExistence type="inferred from homology"/>
<sequence>MYAVFISGGKQYRVVKNQIIRLEKLNSPLGTTIEFDKILMLFDKDSIKIGTPFVEGGTIKAHIQNHGRLKKIKIIKFNRRKHYKKQQGHRQYFTDVKIIDINSIKGEV</sequence>
<organism>
    <name type="scientific">Buchnera aphidicola subsp. Acyrthosiphon pisum (strain APS)</name>
    <name type="common">Acyrthosiphon pisum symbiotic bacterium</name>
    <dbReference type="NCBI Taxonomy" id="107806"/>
    <lineage>
        <taxon>Bacteria</taxon>
        <taxon>Pseudomonadati</taxon>
        <taxon>Pseudomonadota</taxon>
        <taxon>Gammaproteobacteria</taxon>
        <taxon>Enterobacterales</taxon>
        <taxon>Erwiniaceae</taxon>
        <taxon>Buchnera</taxon>
    </lineage>
</organism>
<gene>
    <name evidence="1" type="primary">rplU</name>
    <name type="ordered locus">BU387</name>
</gene>
<comment type="function">
    <text evidence="1">This protein binds to 23S rRNA in the presence of protein L20.</text>
</comment>
<comment type="subunit">
    <text evidence="1">Part of the 50S ribosomal subunit. Contacts protein L20.</text>
</comment>
<comment type="similarity">
    <text evidence="1">Belongs to the bacterial ribosomal protein bL21 family.</text>
</comment>
<accession>P57467</accession>
<dbReference type="EMBL" id="BA000003">
    <property type="protein sequence ID" value="BAB13090.1"/>
    <property type="molecule type" value="Genomic_DNA"/>
</dbReference>
<dbReference type="RefSeq" id="NP_240204.1">
    <property type="nucleotide sequence ID" value="NC_002528.1"/>
</dbReference>
<dbReference type="RefSeq" id="WP_009874344.1">
    <property type="nucleotide sequence ID" value="NZ_AP036055.1"/>
</dbReference>
<dbReference type="SMR" id="P57467"/>
<dbReference type="STRING" id="563178.BUAP5A_380"/>
<dbReference type="EnsemblBacteria" id="BAB13090">
    <property type="protein sequence ID" value="BAB13090"/>
    <property type="gene ID" value="BAB13090"/>
</dbReference>
<dbReference type="KEGG" id="buc:BU387"/>
<dbReference type="PATRIC" id="fig|107806.10.peg.401"/>
<dbReference type="eggNOG" id="COG0261">
    <property type="taxonomic scope" value="Bacteria"/>
</dbReference>
<dbReference type="HOGENOM" id="CLU_061463_3_3_6"/>
<dbReference type="Proteomes" id="UP000001806">
    <property type="component" value="Chromosome"/>
</dbReference>
<dbReference type="GO" id="GO:0005737">
    <property type="term" value="C:cytoplasm"/>
    <property type="evidence" value="ECO:0007669"/>
    <property type="project" value="UniProtKB-ARBA"/>
</dbReference>
<dbReference type="GO" id="GO:1990904">
    <property type="term" value="C:ribonucleoprotein complex"/>
    <property type="evidence" value="ECO:0007669"/>
    <property type="project" value="UniProtKB-KW"/>
</dbReference>
<dbReference type="GO" id="GO:0005840">
    <property type="term" value="C:ribosome"/>
    <property type="evidence" value="ECO:0007669"/>
    <property type="project" value="UniProtKB-KW"/>
</dbReference>
<dbReference type="GO" id="GO:0019843">
    <property type="term" value="F:rRNA binding"/>
    <property type="evidence" value="ECO:0007669"/>
    <property type="project" value="UniProtKB-UniRule"/>
</dbReference>
<dbReference type="GO" id="GO:0003735">
    <property type="term" value="F:structural constituent of ribosome"/>
    <property type="evidence" value="ECO:0007669"/>
    <property type="project" value="InterPro"/>
</dbReference>
<dbReference type="GO" id="GO:0006412">
    <property type="term" value="P:translation"/>
    <property type="evidence" value="ECO:0007669"/>
    <property type="project" value="UniProtKB-UniRule"/>
</dbReference>
<dbReference type="HAMAP" id="MF_01363">
    <property type="entry name" value="Ribosomal_bL21"/>
    <property type="match status" value="1"/>
</dbReference>
<dbReference type="InterPro" id="IPR028909">
    <property type="entry name" value="bL21-like"/>
</dbReference>
<dbReference type="InterPro" id="IPR036164">
    <property type="entry name" value="bL21-like_sf"/>
</dbReference>
<dbReference type="InterPro" id="IPR001787">
    <property type="entry name" value="Ribosomal_bL21"/>
</dbReference>
<dbReference type="InterPro" id="IPR018258">
    <property type="entry name" value="Ribosomal_bL21_CS"/>
</dbReference>
<dbReference type="NCBIfam" id="TIGR00061">
    <property type="entry name" value="L21"/>
    <property type="match status" value="1"/>
</dbReference>
<dbReference type="PANTHER" id="PTHR21349">
    <property type="entry name" value="50S RIBOSOMAL PROTEIN L21"/>
    <property type="match status" value="1"/>
</dbReference>
<dbReference type="PANTHER" id="PTHR21349:SF0">
    <property type="entry name" value="LARGE RIBOSOMAL SUBUNIT PROTEIN BL21M"/>
    <property type="match status" value="1"/>
</dbReference>
<dbReference type="Pfam" id="PF00829">
    <property type="entry name" value="Ribosomal_L21p"/>
    <property type="match status" value="1"/>
</dbReference>
<dbReference type="SUPFAM" id="SSF141091">
    <property type="entry name" value="L21p-like"/>
    <property type="match status" value="1"/>
</dbReference>
<dbReference type="PROSITE" id="PS01169">
    <property type="entry name" value="RIBOSOMAL_L21"/>
    <property type="match status" value="1"/>
</dbReference>
<keyword id="KW-1185">Reference proteome</keyword>
<keyword id="KW-0687">Ribonucleoprotein</keyword>
<keyword id="KW-0689">Ribosomal protein</keyword>
<keyword id="KW-0694">RNA-binding</keyword>
<keyword id="KW-0699">rRNA-binding</keyword>
<reference key="1">
    <citation type="journal article" date="2000" name="Nature">
        <title>Genome sequence of the endocellular bacterial symbiont of aphids Buchnera sp. APS.</title>
        <authorList>
            <person name="Shigenobu S."/>
            <person name="Watanabe H."/>
            <person name="Hattori M."/>
            <person name="Sakaki Y."/>
            <person name="Ishikawa H."/>
        </authorList>
    </citation>
    <scope>NUCLEOTIDE SEQUENCE [LARGE SCALE GENOMIC DNA]</scope>
    <source>
        <strain>APS</strain>
    </source>
</reference>
<name>RL21_BUCAI</name>
<feature type="chain" id="PRO_0000180992" description="Large ribosomal subunit protein bL21">
    <location>
        <begin position="1"/>
        <end position="108"/>
    </location>
</feature>
<evidence type="ECO:0000255" key="1">
    <source>
        <dbReference type="HAMAP-Rule" id="MF_01363"/>
    </source>
</evidence>
<evidence type="ECO:0000305" key="2"/>
<protein>
    <recommendedName>
        <fullName evidence="1">Large ribosomal subunit protein bL21</fullName>
    </recommendedName>
    <alternativeName>
        <fullName evidence="2">50S ribosomal protein L21</fullName>
    </alternativeName>
</protein>